<gene>
    <name type="primary">env</name>
</gene>
<reference key="1">
    <citation type="journal article" date="1985" name="J. Virol.">
        <title>Nucleotide sequence of avian sarcoma virus UR2 and comparison of its transforming gene with other members of the tyrosine protein kinase oncogene family.</title>
        <authorList>
            <person name="Neckameyer W.S."/>
            <person name="Wang L.-H."/>
        </authorList>
    </citation>
    <scope>NUCLEOTIDE SEQUENCE [GENOMIC DNA]</scope>
</reference>
<comment type="function">
    <molecule>Transmembrane protein</molecule>
    <text evidence="3">The transmembrane protein (TM) acts as a class I viral fusion protein. Under the current model, the protein has at least 3 conformational states: pre-fusion native state, pre-hairpin intermediate state, and post-fusion hairpin state. During viral and target cell membrane fusion, the coiled coil regions (heptad repeats) assume a trimer-of-hairpins structure, positioning the fusion peptide in close proximity to the C-terminal region of the ectodomain. The formation of this structure appears to drive apposition and subsequent fusion of viral and target cell membranes. Membranes fusion leads to delivery of the nucleocapsid into the cytoplasm.</text>
</comment>
<comment type="subunit">
    <molecule>Transmembrane protein</molecule>
    <text evidence="3">Heterodimer with the surface protein. The mature envelope protein (Env) consists of a trimer of SU-TM heterodimers attached by a labile interchain disulfide bond.</text>
</comment>
<comment type="subcellular location">
    <molecule>Transmembrane protein</molecule>
    <subcellularLocation>
        <location evidence="5">Virion membrane</location>
        <topology evidence="3">Single-pass type I membrane protein</topology>
    </subcellularLocation>
    <subcellularLocation>
        <location evidence="5">Host cell membrane</location>
        <topology evidence="3">Single-pass type I membrane protein</topology>
    </subcellularLocation>
</comment>
<comment type="domain">
    <molecule>Envelope glycoprotein</molecule>
    <text evidence="1">The 17 amino acids long immunosuppressive region is present in many retroviral envelope proteins. Synthetic peptides derived from this relatively conserved sequence inhibit immune function in vitro and in vivo (By similarity).</text>
</comment>
<comment type="PTM">
    <molecule>Envelope glycoprotein</molecule>
    <text evidence="1">Specific enzymatic cleavages in vivo yield mature proteins. Envelope glycoproteins are synthesized as an inactive precursor that is N-glycosylated and processed likely by host cell furin or by a furin-like protease in the Golgi to yield the mature SU and TM proteins. The cleavage site between SU and TM requires the minimal sequence [KR]-X-[KR]-R (By similarity).</text>
</comment>
<comment type="PTM">
    <molecule>Transmembrane protein</molecule>
    <text evidence="2">The transmembrane protein is palmitoylated. Palmitoylation is necessary for glycoprotein function and infectivity.</text>
</comment>
<comment type="similarity">
    <text evidence="5">Belongs to the Alpharetroviruses envelope glycoprotein family.</text>
</comment>
<dbReference type="EMBL" id="M10455">
    <property type="status" value="NOT_ANNOTATED_CDS"/>
    <property type="molecule type" value="Genomic_DNA"/>
</dbReference>
<dbReference type="PIR" id="A03998">
    <property type="entry name" value="VCFVUR"/>
</dbReference>
<dbReference type="RefSeq" id="NP_597837.2">
    <property type="nucleotide sequence ID" value="NC_001618.1"/>
</dbReference>
<dbReference type="SMR" id="P03398"/>
<dbReference type="KEGG" id="vg:1491915"/>
<dbReference type="OrthoDB" id="35841at10239"/>
<dbReference type="Proteomes" id="UP000143802">
    <property type="component" value="Genome"/>
</dbReference>
<dbReference type="GO" id="GO:0020002">
    <property type="term" value="C:host cell plasma membrane"/>
    <property type="evidence" value="ECO:0007669"/>
    <property type="project" value="UniProtKB-SubCell"/>
</dbReference>
<dbReference type="GO" id="GO:0016020">
    <property type="term" value="C:membrane"/>
    <property type="evidence" value="ECO:0007669"/>
    <property type="project" value="UniProtKB-KW"/>
</dbReference>
<dbReference type="GO" id="GO:0019031">
    <property type="term" value="C:viral envelope"/>
    <property type="evidence" value="ECO:0007669"/>
    <property type="project" value="UniProtKB-KW"/>
</dbReference>
<dbReference type="GO" id="GO:0055036">
    <property type="term" value="C:virion membrane"/>
    <property type="evidence" value="ECO:0007669"/>
    <property type="project" value="UniProtKB-SubCell"/>
</dbReference>
<dbReference type="GO" id="GO:0019064">
    <property type="term" value="P:fusion of virus membrane with host plasma membrane"/>
    <property type="evidence" value="ECO:0007669"/>
    <property type="project" value="UniProtKB-KW"/>
</dbReference>
<dbReference type="GO" id="GO:0046718">
    <property type="term" value="P:symbiont entry into host cell"/>
    <property type="evidence" value="ECO:0007669"/>
    <property type="project" value="UniProtKB-KW"/>
</dbReference>
<dbReference type="GO" id="GO:0019062">
    <property type="term" value="P:virion attachment to host cell"/>
    <property type="evidence" value="ECO:0007669"/>
    <property type="project" value="UniProtKB-KW"/>
</dbReference>
<dbReference type="CDD" id="cd09949">
    <property type="entry name" value="RSV-like_HR1-HR2"/>
    <property type="match status" value="1"/>
</dbReference>
<dbReference type="Gene3D" id="1.10.287.210">
    <property type="match status" value="1"/>
</dbReference>
<dbReference type="InterPro" id="IPR018154">
    <property type="entry name" value="TLV/ENV_coat_polyprotein"/>
</dbReference>
<dbReference type="PANTHER" id="PTHR10424:SF73">
    <property type="entry name" value="ENDOGENOUS RETROVIRUS GROUP FC1 ENV POLYPROTEIN-RELATED"/>
    <property type="match status" value="1"/>
</dbReference>
<dbReference type="PANTHER" id="PTHR10424">
    <property type="entry name" value="VIRAL ENVELOPE PROTEIN"/>
    <property type="match status" value="1"/>
</dbReference>
<dbReference type="Pfam" id="PF00429">
    <property type="entry name" value="TLV_coat"/>
    <property type="match status" value="1"/>
</dbReference>
<dbReference type="SUPFAM" id="SSF58069">
    <property type="entry name" value="Virus ectodomain"/>
    <property type="match status" value="1"/>
</dbReference>
<organism>
    <name type="scientific">UR2 avian sarcoma virus</name>
    <name type="common">UR2SV</name>
    <name type="synonym">Avian sarcoma virus (strain UR2)</name>
    <dbReference type="NCBI Taxonomy" id="354090"/>
    <lineage>
        <taxon>Viruses</taxon>
        <taxon>Riboviria</taxon>
        <taxon>Pararnavirae</taxon>
        <taxon>Artverviricota</taxon>
        <taxon>Revtraviricetes</taxon>
        <taxon>Ortervirales</taxon>
        <taxon>Retroviridae</taxon>
        <taxon>Orthoretrovirinae</taxon>
        <taxon>Alpharetrovirus</taxon>
    </lineage>
</organism>
<sequence>VAAAQALREIERLACWSVKQANLTTSLLGDLLDDVTSIRHAVLQNRAAIDFLLLAHGHGCEDIAGMCCFNLSDHSESIQKKFQLMKEHVNKIGVDSDPIGSWLRGLFGGIGEWAVHLLKGLLLGLVVILLLVVCLPCLLQFVSSSIRKMIDNSLGYREERKKFQEAYKQPERVV</sequence>
<name>ENV_AVISU</name>
<keyword id="KW-0165">Cleavage on pair of basic residues</keyword>
<keyword id="KW-0175">Coiled coil</keyword>
<keyword id="KW-1015">Disulfide bond</keyword>
<keyword id="KW-1169">Fusion of virus membrane with host cell membrane</keyword>
<keyword id="KW-1168">Fusion of virus membrane with host membrane</keyword>
<keyword id="KW-0325">Glycoprotein</keyword>
<keyword id="KW-1032">Host cell membrane</keyword>
<keyword id="KW-1043">Host membrane</keyword>
<keyword id="KW-0945">Host-virus interaction</keyword>
<keyword id="KW-0449">Lipoprotein</keyword>
<keyword id="KW-0472">Membrane</keyword>
<keyword id="KW-0564">Palmitate</keyword>
<keyword id="KW-0812">Transmembrane</keyword>
<keyword id="KW-1133">Transmembrane helix</keyword>
<keyword id="KW-1161">Viral attachment to host cell</keyword>
<keyword id="KW-0261">Viral envelope protein</keyword>
<keyword id="KW-1162">Viral penetration into host cytoplasm</keyword>
<keyword id="KW-0946">Virion</keyword>
<keyword id="KW-1160">Virus entry into host cell</keyword>
<accession>P03398</accession>
<evidence type="ECO:0000250" key="1"/>
<evidence type="ECO:0000250" key="2">
    <source>
        <dbReference type="UniProtKB" id="P03396"/>
    </source>
</evidence>
<evidence type="ECO:0000250" key="3">
    <source>
        <dbReference type="UniProtKB" id="P0DTM4"/>
    </source>
</evidence>
<evidence type="ECO:0000255" key="4"/>
<evidence type="ECO:0000305" key="5"/>
<feature type="chain" id="PRO_0000239548" description="Envelope glycoprotein">
    <location>
        <begin position="1" status="less than"/>
        <end position="174"/>
    </location>
</feature>
<feature type="chain" id="PRO_0000125467" description="Transmembrane protein">
    <location>
        <begin position="1"/>
        <end position="174"/>
    </location>
</feature>
<feature type="topological domain" description="Extracellular" evidence="4">
    <location>
        <begin position="1" status="less than"/>
        <end position="121"/>
    </location>
</feature>
<feature type="transmembrane region" description="Helical" evidence="4">
    <location>
        <begin position="122"/>
        <end position="142"/>
    </location>
</feature>
<feature type="topological domain" description="Cytoplasmic" evidence="4">
    <location>
        <begin position="143"/>
        <end position="174"/>
    </location>
</feature>
<feature type="coiled-coil region" evidence="4">
    <location>
        <begin position="4"/>
        <end position="54"/>
    </location>
</feature>
<feature type="coiled-coil region" evidence="4">
    <location>
        <begin position="72"/>
        <end position="102"/>
    </location>
</feature>
<feature type="lipid moiety-binding region" description="S-palmitoyl cysteine; by host" evidence="2">
    <location>
        <position position="134"/>
    </location>
</feature>
<feature type="lipid moiety-binding region" description="S-palmitoyl cysteine; by host" evidence="2">
    <location>
        <position position="137"/>
    </location>
</feature>
<feature type="disulfide bond" evidence="3">
    <location>
        <begin position="60"/>
        <end position="67"/>
    </location>
</feature>
<feature type="non-terminal residue">
    <location>
        <position position="1"/>
    </location>
</feature>
<protein>
    <recommendedName>
        <fullName>Envelope glycoprotein</fullName>
    </recommendedName>
    <alternativeName>
        <fullName>Env polyprotein</fullName>
    </alternativeName>
    <component>
        <recommendedName>
            <fullName>Transmembrane protein</fullName>
            <shortName>TM</shortName>
        </recommendedName>
        <alternativeName>
            <fullName>Glycoprotein 37</fullName>
            <shortName>gp37</shortName>
        </alternativeName>
    </component>
</protein>
<proteinExistence type="inferred from homology"/>
<organismHost>
    <name type="scientific">Galliformes</name>
    <dbReference type="NCBI Taxonomy" id="8976"/>
</organismHost>